<keyword id="KW-0227">DNA damage</keyword>
<keyword id="KW-0233">DNA recombination</keyword>
<keyword id="KW-0234">DNA repair</keyword>
<keyword id="KW-1185">Reference proteome</keyword>
<organism>
    <name type="scientific">Cupriavidus metallidurans (strain ATCC 43123 / DSM 2839 / NBRC 102507 / CH34)</name>
    <name type="common">Ralstonia metallidurans</name>
    <dbReference type="NCBI Taxonomy" id="266264"/>
    <lineage>
        <taxon>Bacteria</taxon>
        <taxon>Pseudomonadati</taxon>
        <taxon>Pseudomonadota</taxon>
        <taxon>Betaproteobacteria</taxon>
        <taxon>Burkholderiales</taxon>
        <taxon>Burkholderiaceae</taxon>
        <taxon>Cupriavidus</taxon>
    </lineage>
</organism>
<dbReference type="EMBL" id="CP000352">
    <property type="protein sequence ID" value="ABF09293.1"/>
    <property type="molecule type" value="Genomic_DNA"/>
</dbReference>
<dbReference type="RefSeq" id="WP_011517011.1">
    <property type="nucleotide sequence ID" value="NC_007973.1"/>
</dbReference>
<dbReference type="SMR" id="Q1LKN3"/>
<dbReference type="STRING" id="266264.Rmet_2416"/>
<dbReference type="KEGG" id="rme:Rmet_2416"/>
<dbReference type="eggNOG" id="COG1381">
    <property type="taxonomic scope" value="Bacteria"/>
</dbReference>
<dbReference type="HOGENOM" id="CLU_066645_0_0_4"/>
<dbReference type="Proteomes" id="UP000002429">
    <property type="component" value="Chromosome"/>
</dbReference>
<dbReference type="GO" id="GO:0043590">
    <property type="term" value="C:bacterial nucleoid"/>
    <property type="evidence" value="ECO:0007669"/>
    <property type="project" value="TreeGrafter"/>
</dbReference>
<dbReference type="GO" id="GO:0006310">
    <property type="term" value="P:DNA recombination"/>
    <property type="evidence" value="ECO:0007669"/>
    <property type="project" value="UniProtKB-UniRule"/>
</dbReference>
<dbReference type="GO" id="GO:0006302">
    <property type="term" value="P:double-strand break repair"/>
    <property type="evidence" value="ECO:0007669"/>
    <property type="project" value="TreeGrafter"/>
</dbReference>
<dbReference type="Gene3D" id="2.40.50.140">
    <property type="entry name" value="Nucleic acid-binding proteins"/>
    <property type="match status" value="1"/>
</dbReference>
<dbReference type="Gene3D" id="1.20.1440.120">
    <property type="entry name" value="Recombination protein O, C-terminal domain"/>
    <property type="match status" value="1"/>
</dbReference>
<dbReference type="HAMAP" id="MF_00201">
    <property type="entry name" value="RecO"/>
    <property type="match status" value="1"/>
</dbReference>
<dbReference type="InterPro" id="IPR037278">
    <property type="entry name" value="ARFGAP/RecO"/>
</dbReference>
<dbReference type="InterPro" id="IPR022572">
    <property type="entry name" value="DNA_rep/recomb_RecO_N"/>
</dbReference>
<dbReference type="InterPro" id="IPR012340">
    <property type="entry name" value="NA-bd_OB-fold"/>
</dbReference>
<dbReference type="InterPro" id="IPR003717">
    <property type="entry name" value="RecO"/>
</dbReference>
<dbReference type="InterPro" id="IPR042242">
    <property type="entry name" value="RecO_C"/>
</dbReference>
<dbReference type="NCBIfam" id="TIGR00613">
    <property type="entry name" value="reco"/>
    <property type="match status" value="1"/>
</dbReference>
<dbReference type="PANTHER" id="PTHR33991">
    <property type="entry name" value="DNA REPAIR PROTEIN RECO"/>
    <property type="match status" value="1"/>
</dbReference>
<dbReference type="PANTHER" id="PTHR33991:SF1">
    <property type="entry name" value="DNA REPAIR PROTEIN RECO"/>
    <property type="match status" value="1"/>
</dbReference>
<dbReference type="Pfam" id="PF02565">
    <property type="entry name" value="RecO_C"/>
    <property type="match status" value="1"/>
</dbReference>
<dbReference type="Pfam" id="PF11967">
    <property type="entry name" value="RecO_N"/>
    <property type="match status" value="1"/>
</dbReference>
<dbReference type="SUPFAM" id="SSF57863">
    <property type="entry name" value="ArfGap/RecO-like zinc finger"/>
    <property type="match status" value="1"/>
</dbReference>
<dbReference type="SUPFAM" id="SSF50249">
    <property type="entry name" value="Nucleic acid-binding proteins"/>
    <property type="match status" value="1"/>
</dbReference>
<sequence length="298" mass="33106">MPDVRRAAAPRARSADPIAEEAAELLGSGAVPAMNAAVSPSVAAGREMMDRAMRIVPARSELRVTNEAGFVLHAHPYRETSLVLDVFTRDHGRVAMVAKGAKRPHSALRAVLQHFHPIALSWTGRGEVKTLTKAEYVGGMLPLSGDALLSGFYLNELLLRFCPREDAHPTLFRHYMATLTRLSHGEPASFVLRSFERVLLQETGFAVAFDQCLRSGERVQPGLDYVYQPERGVRRTHASDPSSWPVVSGQTLLDMAQDDYSRAQTVSQSRALMRFLLHYYLQGAPLKTRQILIDLQYL</sequence>
<evidence type="ECO:0000255" key="1">
    <source>
        <dbReference type="HAMAP-Rule" id="MF_00201"/>
    </source>
</evidence>
<protein>
    <recommendedName>
        <fullName evidence="1">DNA repair protein RecO</fullName>
    </recommendedName>
    <alternativeName>
        <fullName evidence="1">Recombination protein O</fullName>
    </alternativeName>
</protein>
<feature type="chain" id="PRO_0000264832" description="DNA repair protein RecO">
    <location>
        <begin position="1"/>
        <end position="298"/>
    </location>
</feature>
<accession>Q1LKN3</accession>
<proteinExistence type="inferred from homology"/>
<gene>
    <name evidence="1" type="primary">recO</name>
    <name type="ordered locus">Rmet_2416</name>
</gene>
<comment type="function">
    <text evidence="1">Involved in DNA repair and RecF pathway recombination.</text>
</comment>
<comment type="similarity">
    <text evidence="1">Belongs to the RecO family.</text>
</comment>
<reference key="1">
    <citation type="journal article" date="2010" name="PLoS ONE">
        <title>The complete genome sequence of Cupriavidus metallidurans strain CH34, a master survivalist in harsh and anthropogenic environments.</title>
        <authorList>
            <person name="Janssen P.J."/>
            <person name="Van Houdt R."/>
            <person name="Moors H."/>
            <person name="Monsieurs P."/>
            <person name="Morin N."/>
            <person name="Michaux A."/>
            <person name="Benotmane M.A."/>
            <person name="Leys N."/>
            <person name="Vallaeys T."/>
            <person name="Lapidus A."/>
            <person name="Monchy S."/>
            <person name="Medigue C."/>
            <person name="Taghavi S."/>
            <person name="McCorkle S."/>
            <person name="Dunn J."/>
            <person name="van der Lelie D."/>
            <person name="Mergeay M."/>
        </authorList>
    </citation>
    <scope>NUCLEOTIDE SEQUENCE [LARGE SCALE GENOMIC DNA]</scope>
    <source>
        <strain>ATCC 43123 / DSM 2839 / NBRC 102507 / CH34</strain>
    </source>
</reference>
<name>RECO_CUPMC</name>